<feature type="chain" id="PRO_0000085953" description="Serine/threonine-protein kinase flr-4">
    <location>
        <begin position="1"/>
        <end position="570"/>
    </location>
</feature>
<feature type="transmembrane region" description="Helical" evidence="1">
    <location>
        <begin position="400"/>
        <end position="420"/>
    </location>
</feature>
<feature type="transmembrane region" description="Helical" evidence="1">
    <location>
        <begin position="425"/>
        <end position="445"/>
    </location>
</feature>
<feature type="transmembrane region" description="Helical" evidence="1">
    <location>
        <begin position="471"/>
        <end position="491"/>
    </location>
</feature>
<feature type="domain" description="Protein kinase" evidence="2">
    <location>
        <begin position="40"/>
        <end position="331"/>
    </location>
</feature>
<feature type="region of interest" description="Disordered" evidence="4">
    <location>
        <begin position="338"/>
        <end position="369"/>
    </location>
</feature>
<feature type="region of interest" description="Disordered" evidence="4">
    <location>
        <begin position="550"/>
        <end position="570"/>
    </location>
</feature>
<feature type="compositionally biased region" description="Polar residues" evidence="4">
    <location>
        <begin position="346"/>
        <end position="361"/>
    </location>
</feature>
<feature type="active site" description="Proton acceptor" evidence="2 3">
    <location>
        <position position="172"/>
    </location>
</feature>
<feature type="binding site" evidence="2">
    <location>
        <begin position="46"/>
        <end position="54"/>
    </location>
    <ligand>
        <name>ATP</name>
        <dbReference type="ChEBI" id="CHEBI:30616"/>
    </ligand>
</feature>
<feature type="binding site" evidence="2">
    <location>
        <position position="67"/>
    </location>
    <ligand>
        <name>ATP</name>
        <dbReference type="ChEBI" id="CHEBI:30616"/>
    </ligand>
</feature>
<feature type="mutagenesis site" description="In n2259; possibly inactive; induces very short defecation cycle periods. Increases lifespan, induces the phosphorylation of pmk-1 and upregulates xenobiotic detoxification genes when grown on E.coli HT115 but not OP50. Tolerates higher concentration of toxic metabolite, exogenous propionic acid, when grown on E.coli HT115, without larval arrest, probably due to greater sensitivity to higher levels of dietary vitamin B12. Increased B12 leads to a reduction in the level of phosphatidylcholine, activates p38 MAPK pathway, and increases the expression of cytoprotective genes. Shows higher resistance to osmotic pressure and faster osmotic stress recovery. Results in higher phosphorylation of pmk-1 by sek-1." evidence="5 6 7">
    <original>P</original>
    <variation>S</variation>
    <location>
        <position position="223"/>
    </location>
</feature>
<feature type="mutagenesis site" description="In sa201; induces very short defecation cycle periods." evidence="5">
    <original>G</original>
    <variation>R</variation>
    <location>
        <position position="248"/>
    </location>
</feature>
<feature type="mutagenesis site" description="In u7; weak antimorph that induces very short defecation cycle periods." evidence="5">
    <original>G</original>
    <variation>R</variation>
    <location>
        <position position="494"/>
    </location>
</feature>
<sequence length="570" mass="64561">MPINYNRNAVELKLSSQLLQWLDQRLPLGDPMRIPSIDSYKYIQDLGKGRFGTVCKFSNGNTFETVKKVDLTIFNHWTQSETKVSNRLDTFLYEFRHLHKVTNDNNRIVNFLGIYADSNQMYIMSEYLPRGSVKDLLVKETLGEDTAIKYLMETVEALDYLHNLSPPVIHRDIKAANLLITSNDSIKLANFGLVRDLAVDGFGIAIASEITLDFRATLLYVAPEVLSSALGPGNRNAYELPADIWALGCTFIEMLLKRPPHFEYFGHIDEIPKVLLGYAKSEDGKVLPYTSEVLVPSSSNCVQKIVDLVFIKSPEHRPNTHKLRIQIKKILDDDSESEEETDISHPISNSNTDSSTAISHNHSNDRKVGRAGTCLPIESMEYAAVRKELKKRSKPKSNNIMQIFVASGYYLSRILYFLNILTRSICYLLLFLSLGITALGSFLLISYFVVRFVRYLIAINCNCDLMQPQYLIISGILIVLMFALLFSCCMVALGEYKFRMANQTLDGSKFYLPRPQKSAVLCGITVITGKEDAKDTAQNMEEEIHLTPSVRRNHDDYYYDESSGPANEEN</sequence>
<reference key="1">
    <citation type="journal article" date="2005" name="Mol. Biol. Cell">
        <title>FLR-4, a novel serine/threonine protein kinase, regulates defecation rhythm in Caenorhabditis elegans.</title>
        <authorList>
            <person name="Take-Uchi M."/>
            <person name="Kobayashi Y."/>
            <person name="Kimura K.D."/>
            <person name="Ishihara T."/>
            <person name="Katsura I."/>
        </authorList>
    </citation>
    <scope>NUCLEOTIDE SEQUENCE [MRNA]</scope>
    <scope>FUNCTION</scope>
    <scope>SUBCELLULAR LOCATION</scope>
    <scope>TISSUE SPECIFICITY</scope>
    <scope>MUTAGENESIS OF PRO-223; GLY-248 AND GLY-494</scope>
    <source>
        <strain>Bristol N2</strain>
    </source>
</reference>
<reference key="2">
    <citation type="journal article" date="1998" name="Science">
        <title>Genome sequence of the nematode C. elegans: a platform for investigating biology.</title>
        <authorList>
            <consortium name="The C. elegans sequencing consortium"/>
        </authorList>
    </citation>
    <scope>NUCLEOTIDE SEQUENCE [LARGE SCALE GENOMIC DNA]</scope>
    <source>
        <strain>Bristol N2</strain>
    </source>
</reference>
<reference evidence="8" key="3">
    <citation type="journal article" date="2018" name="PLoS Genet.">
        <title>A novel gene-diet pair modulates C. elegans aging.</title>
        <authorList>
            <person name="Verma S."/>
            <person name="Jagtap U."/>
            <person name="Goyala A."/>
            <person name="Mukhopadhyay A."/>
        </authorList>
    </citation>
    <scope>FUNCTION</scope>
    <scope>TISSUE SPECIFICITY</scope>
    <scope>DISRUPTION PHENOTYPE</scope>
    <scope>MUTAGENESIS OF PRO-223</scope>
</reference>
<reference evidence="8" key="4">
    <citation type="journal article" date="2022" name="Aging Cell">
        <title>Adaptive capacity to dietary Vitamin B12 levels is maintained by a gene-diet interaction that ensures optimal life span.</title>
        <authorList>
            <person name="Nair T."/>
            <person name="Chakraborty R."/>
            <person name="Singh P."/>
            <person name="Rahman S.S."/>
            <person name="Bhaskar A.K."/>
            <person name="Sengupta S."/>
            <person name="Mukhopadhyay A."/>
        </authorList>
    </citation>
    <scope>FUNCTION</scope>
    <scope>MUTAGENESIS OF PRO-223</scope>
</reference>
<organism>
    <name type="scientific">Caenorhabditis elegans</name>
    <dbReference type="NCBI Taxonomy" id="6239"/>
    <lineage>
        <taxon>Eukaryota</taxon>
        <taxon>Metazoa</taxon>
        <taxon>Ecdysozoa</taxon>
        <taxon>Nematoda</taxon>
        <taxon>Chromadorea</taxon>
        <taxon>Rhabditida</taxon>
        <taxon>Rhabditina</taxon>
        <taxon>Rhabditomorpha</taxon>
        <taxon>Rhabditoidea</taxon>
        <taxon>Rhabditidae</taxon>
        <taxon>Peloderinae</taxon>
        <taxon>Caenorhabditis</taxon>
    </lineage>
</organism>
<evidence type="ECO:0000255" key="1"/>
<evidence type="ECO:0000255" key="2">
    <source>
        <dbReference type="PROSITE-ProRule" id="PRU00159"/>
    </source>
</evidence>
<evidence type="ECO:0000255" key="3">
    <source>
        <dbReference type="PROSITE-ProRule" id="PRU10027"/>
    </source>
</evidence>
<evidence type="ECO:0000256" key="4">
    <source>
        <dbReference type="SAM" id="MobiDB-lite"/>
    </source>
</evidence>
<evidence type="ECO:0000269" key="5">
    <source>
    </source>
</evidence>
<evidence type="ECO:0000269" key="6">
    <source>
    </source>
</evidence>
<evidence type="ECO:0000269" key="7">
    <source>
    </source>
</evidence>
<evidence type="ECO:0000305" key="8"/>
<evidence type="ECO:0000305" key="9">
    <source>
    </source>
</evidence>
<comment type="function">
    <text evidence="5 6 7">Probable serine-threonine protein kinase involved in the control of defecation rhythms. Required to increase the length of defecation cycle period. Acts in a cell-functional rather than developmental aspect in the regulation of defecation rhythms. Prevents preferential activation of the p38 MAPK pathway in response to the levels of vitamin B12 in different food types during larval development, thereby regulating the expression of cytoprotective genes, modulating life span and stress tolerance (PubMed:30125273, PubMed:35032420).</text>
</comment>
<comment type="catalytic activity">
    <reaction>
        <text>L-seryl-[protein] + ATP = O-phospho-L-seryl-[protein] + ADP + H(+)</text>
        <dbReference type="Rhea" id="RHEA:17989"/>
        <dbReference type="Rhea" id="RHEA-COMP:9863"/>
        <dbReference type="Rhea" id="RHEA-COMP:11604"/>
        <dbReference type="ChEBI" id="CHEBI:15378"/>
        <dbReference type="ChEBI" id="CHEBI:29999"/>
        <dbReference type="ChEBI" id="CHEBI:30616"/>
        <dbReference type="ChEBI" id="CHEBI:83421"/>
        <dbReference type="ChEBI" id="CHEBI:456216"/>
        <dbReference type="EC" id="2.7.11.1"/>
    </reaction>
</comment>
<comment type="catalytic activity">
    <reaction>
        <text>L-threonyl-[protein] + ATP = O-phospho-L-threonyl-[protein] + ADP + H(+)</text>
        <dbReference type="Rhea" id="RHEA:46608"/>
        <dbReference type="Rhea" id="RHEA-COMP:11060"/>
        <dbReference type="Rhea" id="RHEA-COMP:11605"/>
        <dbReference type="ChEBI" id="CHEBI:15378"/>
        <dbReference type="ChEBI" id="CHEBI:30013"/>
        <dbReference type="ChEBI" id="CHEBI:30616"/>
        <dbReference type="ChEBI" id="CHEBI:61977"/>
        <dbReference type="ChEBI" id="CHEBI:456216"/>
        <dbReference type="EC" id="2.7.11.1"/>
    </reaction>
</comment>
<comment type="subcellular location">
    <subcellularLocation>
        <location evidence="9">Membrane</location>
        <topology evidence="9">Multi-pass membrane protein</topology>
    </subcellularLocation>
</comment>
<comment type="tissue specificity">
    <text evidence="5 6">Present in the intestinal cells from comma-stage embryos through the adult stage, although the intestinal expression is weaker after the L1 stage (PubMed:15647385). Accumulates at the cell membrane of intestinal cells, especially the lateral membrane intervening the intestinal cells (PubMed:15647385, PubMed:30125273). Also detected in the muscles of the pharyngeal isthmus from the 3-fold embryonic stage, and in a pair of head neurons, which correspond to the AUA neurons, from the late L1 stage (at protein level) (PubMed:15647385, PubMed:30125273).</text>
</comment>
<comment type="disruption phenotype">
    <text evidence="6">RNAi-mediated knockdown increases lifespan, probably via nhr-8 downstream up-regulation of genes involved in the xenobiotic detoxification pathway, such as cytochrome p450 cyp-35b1 (PubMed:30125273). Results in increased lifespan with less lipofuscin accumulation and better motility, independent of simultaneous RNAi-mediated knockdown of hsf-1 (PubMed:30125273). Delays reproductive span and reduces brood size, mainly when grown on E.coli HT115 and not OP50 (PubMed:30125273). Increases the phosphorylation of pmk-1 in a sek-1 dependent manner (PubMed:30125273).</text>
</comment>
<comment type="similarity">
    <text evidence="2">Belongs to the protein kinase superfamily. Ser/Thr protein kinase family.</text>
</comment>
<protein>
    <recommendedName>
        <fullName>Serine/threonine-protein kinase flr-4</fullName>
        <ecNumber>2.7.11.1</ecNumber>
    </recommendedName>
    <alternativeName>
        <fullName>Fluoride-resistant protein 4</fullName>
    </alternativeName>
</protein>
<accession>Q9NLA1</accession>
<keyword id="KW-0067">ATP-binding</keyword>
<keyword id="KW-0090">Biological rhythms</keyword>
<keyword id="KW-0418">Kinase</keyword>
<keyword id="KW-0472">Membrane</keyword>
<keyword id="KW-0547">Nucleotide-binding</keyword>
<keyword id="KW-1185">Reference proteome</keyword>
<keyword id="KW-0723">Serine/threonine-protein kinase</keyword>
<keyword id="KW-0808">Transferase</keyword>
<keyword id="KW-0812">Transmembrane</keyword>
<keyword id="KW-1133">Transmembrane helix</keyword>
<dbReference type="EC" id="2.7.11.1"/>
<dbReference type="EMBL" id="AB012700">
    <property type="protein sequence ID" value="BAA89795.1"/>
    <property type="molecule type" value="mRNA"/>
</dbReference>
<dbReference type="EMBL" id="Z83104">
    <property type="protein sequence ID" value="CAC35810.1"/>
    <property type="molecule type" value="Genomic_DNA"/>
</dbReference>
<dbReference type="RefSeq" id="NP_510508.1">
    <property type="nucleotide sequence ID" value="NM_078107.6"/>
</dbReference>
<dbReference type="SMR" id="Q9NLA1"/>
<dbReference type="FunCoup" id="Q9NLA1">
    <property type="interactions" value="52"/>
</dbReference>
<dbReference type="STRING" id="6239.F09B12.6.1"/>
<dbReference type="PaxDb" id="6239-F09B12.6"/>
<dbReference type="EnsemblMetazoa" id="F09B12.6.1">
    <property type="protein sequence ID" value="F09B12.6.1"/>
    <property type="gene ID" value="WBGene00001468"/>
</dbReference>
<dbReference type="GeneID" id="181604"/>
<dbReference type="KEGG" id="cel:CELE_F09B12.6"/>
<dbReference type="UCSC" id="F09B12.6">
    <property type="organism name" value="c. elegans"/>
</dbReference>
<dbReference type="AGR" id="WB:WBGene00001468"/>
<dbReference type="CTD" id="181604"/>
<dbReference type="WormBase" id="F09B12.6">
    <property type="protein sequence ID" value="CE26710"/>
    <property type="gene ID" value="WBGene00001468"/>
    <property type="gene designation" value="flr-4"/>
</dbReference>
<dbReference type="eggNOG" id="KOG0198">
    <property type="taxonomic scope" value="Eukaryota"/>
</dbReference>
<dbReference type="HOGENOM" id="CLU_478368_0_0_1"/>
<dbReference type="InParanoid" id="Q9NLA1"/>
<dbReference type="OMA" id="LFSCCMV"/>
<dbReference type="OrthoDB" id="3248549at2759"/>
<dbReference type="PhylomeDB" id="Q9NLA1"/>
<dbReference type="Reactome" id="R-CEL-2559580">
    <property type="pathway name" value="Oxidative Stress Induced Senescence"/>
</dbReference>
<dbReference type="PRO" id="PR:Q9NLA1"/>
<dbReference type="Proteomes" id="UP000001940">
    <property type="component" value="Chromosome X"/>
</dbReference>
<dbReference type="Bgee" id="WBGene00001468">
    <property type="expression patterns" value="Expressed in embryo and 2 other cell types or tissues"/>
</dbReference>
<dbReference type="GO" id="GO:0005737">
    <property type="term" value="C:cytoplasm"/>
    <property type="evidence" value="ECO:0000318"/>
    <property type="project" value="GO_Central"/>
</dbReference>
<dbReference type="GO" id="GO:0005886">
    <property type="term" value="C:plasma membrane"/>
    <property type="evidence" value="ECO:0000314"/>
    <property type="project" value="WormBase"/>
</dbReference>
<dbReference type="GO" id="GO:0005524">
    <property type="term" value="F:ATP binding"/>
    <property type="evidence" value="ECO:0007669"/>
    <property type="project" value="UniProtKB-KW"/>
</dbReference>
<dbReference type="GO" id="GO:0004672">
    <property type="term" value="F:protein kinase activity"/>
    <property type="evidence" value="ECO:0000250"/>
    <property type="project" value="WormBase"/>
</dbReference>
<dbReference type="GO" id="GO:0106310">
    <property type="term" value="F:protein serine kinase activity"/>
    <property type="evidence" value="ECO:0007669"/>
    <property type="project" value="RHEA"/>
</dbReference>
<dbReference type="GO" id="GO:0004674">
    <property type="term" value="F:protein serine/threonine kinase activity"/>
    <property type="evidence" value="ECO:0000318"/>
    <property type="project" value="GO_Central"/>
</dbReference>
<dbReference type="GO" id="GO:0030421">
    <property type="term" value="P:defecation"/>
    <property type="evidence" value="ECO:0000315"/>
    <property type="project" value="WormBase"/>
</dbReference>
<dbReference type="GO" id="GO:0000165">
    <property type="term" value="P:MAPK cascade"/>
    <property type="evidence" value="ECO:0000318"/>
    <property type="project" value="GO_Central"/>
</dbReference>
<dbReference type="GO" id="GO:0048812">
    <property type="term" value="P:neuron projection morphogenesis"/>
    <property type="evidence" value="ECO:0000318"/>
    <property type="project" value="GO_Central"/>
</dbReference>
<dbReference type="GO" id="GO:0043408">
    <property type="term" value="P:regulation of MAPK cascade"/>
    <property type="evidence" value="ECO:0000318"/>
    <property type="project" value="GO_Central"/>
</dbReference>
<dbReference type="GO" id="GO:0048511">
    <property type="term" value="P:rhythmic process"/>
    <property type="evidence" value="ECO:0007669"/>
    <property type="project" value="UniProtKB-KW"/>
</dbReference>
<dbReference type="FunFam" id="1.10.510.10:FF:002502">
    <property type="entry name" value="Serine/threonine-protein kinase flr-4"/>
    <property type="match status" value="1"/>
</dbReference>
<dbReference type="Gene3D" id="1.10.510.10">
    <property type="entry name" value="Transferase(Phosphotransferase) domain 1"/>
    <property type="match status" value="1"/>
</dbReference>
<dbReference type="InterPro" id="IPR011009">
    <property type="entry name" value="Kinase-like_dom_sf"/>
</dbReference>
<dbReference type="InterPro" id="IPR000719">
    <property type="entry name" value="Prot_kinase_dom"/>
</dbReference>
<dbReference type="InterPro" id="IPR017441">
    <property type="entry name" value="Protein_kinase_ATP_BS"/>
</dbReference>
<dbReference type="InterPro" id="IPR008271">
    <property type="entry name" value="Ser/Thr_kinase_AS"/>
</dbReference>
<dbReference type="InterPro" id="IPR050629">
    <property type="entry name" value="STE20/SPS1-PAK"/>
</dbReference>
<dbReference type="PANTHER" id="PTHR48012">
    <property type="entry name" value="STERILE20-LIKE KINASE, ISOFORM B-RELATED"/>
    <property type="match status" value="1"/>
</dbReference>
<dbReference type="Pfam" id="PF00069">
    <property type="entry name" value="Pkinase"/>
    <property type="match status" value="1"/>
</dbReference>
<dbReference type="SMART" id="SM00220">
    <property type="entry name" value="S_TKc"/>
    <property type="match status" value="1"/>
</dbReference>
<dbReference type="SUPFAM" id="SSF56112">
    <property type="entry name" value="Protein kinase-like (PK-like)"/>
    <property type="match status" value="1"/>
</dbReference>
<dbReference type="PROSITE" id="PS00107">
    <property type="entry name" value="PROTEIN_KINASE_ATP"/>
    <property type="match status" value="1"/>
</dbReference>
<dbReference type="PROSITE" id="PS50011">
    <property type="entry name" value="PROTEIN_KINASE_DOM"/>
    <property type="match status" value="1"/>
</dbReference>
<dbReference type="PROSITE" id="PS00108">
    <property type="entry name" value="PROTEIN_KINASE_ST"/>
    <property type="match status" value="1"/>
</dbReference>
<gene>
    <name type="primary">flr-4</name>
    <name type="ORF">F09B12.6</name>
</gene>
<name>FLR4_CAEEL</name>
<proteinExistence type="evidence at protein level"/>